<protein>
    <recommendedName>
        <fullName>Restriction of telomere capping protein 4</fullName>
    </recommendedName>
</protein>
<sequence length="401" mass="46156">MVGPGLGINQVRRKGVYSTKKGSGDNLLLMKRQGKHDIHDRESDDLSGHDAFSPSKKRGKIDSITEDEIEVKKLSTVATFDKLSRSFPNSEVQAAKNAALRGKEKEEEKVVSIPLIQNLKNEDIESIKCRNNNLLDGKKLLLEAELSAVEDNQIFSSSFPEDKKLSLQSCLSSKEQIIKKLQVREEYMSKFKLPPMLFSDELLTEVEPFMPIVMDILEGKISSAYYFEAKNAFKNSQKAYLSVDEFRKLNLNKFTAGFYGLKRQLRVGEEIAKRYKRALTHNQPATLKWWGITDFCNYVLAPETLTSFCIYQLNLSNKSCSSKTPNKHPKQQLNEKEYYYDPELRMLAYDLLEDTVEYGIIVADSDPIEQWEAAIEEDRLRELKLDVHNYSSRRWRLDTHD</sequence>
<feature type="chain" id="PRO_0000408801" description="Restriction of telomere capping protein 4">
    <location>
        <begin position="1"/>
        <end position="401"/>
    </location>
</feature>
<feature type="region of interest" description="Disordered" evidence="3">
    <location>
        <begin position="35"/>
        <end position="59"/>
    </location>
</feature>
<feature type="compositionally biased region" description="Basic and acidic residues" evidence="3">
    <location>
        <begin position="35"/>
        <end position="48"/>
    </location>
</feature>
<feature type="modified residue" description="Phosphoserine" evidence="2">
    <location>
        <position position="23"/>
    </location>
</feature>
<name>RTC4_YEAS7</name>
<proteinExistence type="inferred from homology"/>
<evidence type="ECO:0000250" key="1"/>
<evidence type="ECO:0000250" key="2">
    <source>
        <dbReference type="UniProtKB" id="P53850"/>
    </source>
</evidence>
<evidence type="ECO:0000256" key="3">
    <source>
        <dbReference type="SAM" id="MobiDB-lite"/>
    </source>
</evidence>
<evidence type="ECO:0000305" key="4"/>
<comment type="function">
    <text evidence="1">May be involved in a process influencing telomere capping.</text>
</comment>
<comment type="subcellular location">
    <subcellularLocation>
        <location evidence="1">Cytoplasm</location>
    </subcellularLocation>
    <subcellularLocation>
        <location evidence="1">Nucleus</location>
    </subcellularLocation>
</comment>
<comment type="similarity">
    <text evidence="4">Belongs to the RTC4 family.</text>
</comment>
<dbReference type="EMBL" id="AAFW02000067">
    <property type="protein sequence ID" value="EDN62571.1"/>
    <property type="molecule type" value="Genomic_DNA"/>
</dbReference>
<dbReference type="HOGENOM" id="CLU_049922_0_0_1"/>
<dbReference type="Proteomes" id="UP000007060">
    <property type="component" value="Unassembled WGS sequence"/>
</dbReference>
<dbReference type="GO" id="GO:0005737">
    <property type="term" value="C:cytoplasm"/>
    <property type="evidence" value="ECO:0007669"/>
    <property type="project" value="UniProtKB-SubCell"/>
</dbReference>
<dbReference type="GO" id="GO:0005634">
    <property type="term" value="C:nucleus"/>
    <property type="evidence" value="ECO:0007669"/>
    <property type="project" value="UniProtKB-SubCell"/>
</dbReference>
<dbReference type="InterPro" id="IPR039024">
    <property type="entry name" value="RTC4"/>
</dbReference>
<dbReference type="InterPro" id="IPR028094">
    <property type="entry name" value="RTC4_C"/>
</dbReference>
<dbReference type="PANTHER" id="PTHR41391">
    <property type="entry name" value="RESTRICTION OF TELOMERE CAPPING PROTEIN 4"/>
    <property type="match status" value="1"/>
</dbReference>
<dbReference type="PANTHER" id="PTHR41391:SF1">
    <property type="entry name" value="RESTRICTION OF TELOMERE CAPPING PROTEIN 4"/>
    <property type="match status" value="1"/>
</dbReference>
<dbReference type="Pfam" id="PF14474">
    <property type="entry name" value="RTC4"/>
    <property type="match status" value="1"/>
</dbReference>
<dbReference type="SMART" id="SM01312">
    <property type="entry name" value="RTC4"/>
    <property type="match status" value="1"/>
</dbReference>
<keyword id="KW-0963">Cytoplasm</keyword>
<keyword id="KW-0539">Nucleus</keyword>
<keyword id="KW-0597">Phosphoprotein</keyword>
<accession>A6ZRI9</accession>
<organism>
    <name type="scientific">Saccharomyces cerevisiae (strain YJM789)</name>
    <name type="common">Baker's yeast</name>
    <dbReference type="NCBI Taxonomy" id="307796"/>
    <lineage>
        <taxon>Eukaryota</taxon>
        <taxon>Fungi</taxon>
        <taxon>Dikarya</taxon>
        <taxon>Ascomycota</taxon>
        <taxon>Saccharomycotina</taxon>
        <taxon>Saccharomycetes</taxon>
        <taxon>Saccharomycetales</taxon>
        <taxon>Saccharomycetaceae</taxon>
        <taxon>Saccharomyces</taxon>
    </lineage>
</organism>
<reference key="1">
    <citation type="journal article" date="2007" name="Proc. Natl. Acad. Sci. U.S.A.">
        <title>Genome sequencing and comparative analysis of Saccharomyces cerevisiae strain YJM789.</title>
        <authorList>
            <person name="Wei W."/>
            <person name="McCusker J.H."/>
            <person name="Hyman R.W."/>
            <person name="Jones T."/>
            <person name="Ning Y."/>
            <person name="Cao Z."/>
            <person name="Gu Z."/>
            <person name="Bruno D."/>
            <person name="Miranda M."/>
            <person name="Nguyen M."/>
            <person name="Wilhelmy J."/>
            <person name="Komp C."/>
            <person name="Tamse R."/>
            <person name="Wang X."/>
            <person name="Jia P."/>
            <person name="Luedi P."/>
            <person name="Oefner P.J."/>
            <person name="David L."/>
            <person name="Dietrich F.S."/>
            <person name="Li Y."/>
            <person name="Davis R.W."/>
            <person name="Steinmetz L.M."/>
        </authorList>
    </citation>
    <scope>NUCLEOTIDE SEQUENCE [LARGE SCALE GENOMIC DNA]</scope>
    <source>
        <strain>YJM789</strain>
    </source>
</reference>
<gene>
    <name type="primary">RTC4</name>
    <name type="ORF">SCY_4550</name>
</gene>